<evidence type="ECO:0000250" key="1">
    <source>
        <dbReference type="UniProtKB" id="Q7X993"/>
    </source>
</evidence>
<evidence type="ECO:0000255" key="2">
    <source>
        <dbReference type="PROSITE-ProRule" id="PRU00978"/>
    </source>
</evidence>
<evidence type="ECO:0000255" key="3">
    <source>
        <dbReference type="PROSITE-ProRule" id="PRU01147"/>
    </source>
</evidence>
<evidence type="ECO:0000303" key="4">
    <source>
    </source>
</evidence>
<evidence type="ECO:0000305" key="5"/>
<evidence type="ECO:0000312" key="6">
    <source>
        <dbReference type="EMBL" id="BAS91227.1"/>
    </source>
</evidence>
<evidence type="ECO:0000312" key="7">
    <source>
        <dbReference type="EMBL" id="CAD41728.3"/>
    </source>
</evidence>
<evidence type="ECO:0000312" key="8">
    <source>
        <dbReference type="EMBL" id="EAZ32134.1"/>
    </source>
</evidence>
<gene>
    <name evidence="5" type="primary">TGAL6</name>
    <name evidence="6" type="ordered locus">Os04g0637000</name>
    <name evidence="5" type="ordered locus">LOC_Os04g54474</name>
    <name evidence="8" type="ORF">OsJ_16330</name>
    <name evidence="7" type="ORF">OSJNBb0034I13.13</name>
</gene>
<reference key="1">
    <citation type="journal article" date="2002" name="Nature">
        <title>Sequence and analysis of rice chromosome 4.</title>
        <authorList>
            <person name="Feng Q."/>
            <person name="Zhang Y."/>
            <person name="Hao P."/>
            <person name="Wang S."/>
            <person name="Fu G."/>
            <person name="Huang Y."/>
            <person name="Li Y."/>
            <person name="Zhu J."/>
            <person name="Liu Y."/>
            <person name="Hu X."/>
            <person name="Jia P."/>
            <person name="Zhang Y."/>
            <person name="Zhao Q."/>
            <person name="Ying K."/>
            <person name="Yu S."/>
            <person name="Tang Y."/>
            <person name="Weng Q."/>
            <person name="Zhang L."/>
            <person name="Lu Y."/>
            <person name="Mu J."/>
            <person name="Lu Y."/>
            <person name="Zhang L.S."/>
            <person name="Yu Z."/>
            <person name="Fan D."/>
            <person name="Liu X."/>
            <person name="Lu T."/>
            <person name="Li C."/>
            <person name="Wu Y."/>
            <person name="Sun T."/>
            <person name="Lei H."/>
            <person name="Li T."/>
            <person name="Hu H."/>
            <person name="Guan J."/>
            <person name="Wu M."/>
            <person name="Zhang R."/>
            <person name="Zhou B."/>
            <person name="Chen Z."/>
            <person name="Chen L."/>
            <person name="Jin Z."/>
            <person name="Wang R."/>
            <person name="Yin H."/>
            <person name="Cai Z."/>
            <person name="Ren S."/>
            <person name="Lv G."/>
            <person name="Gu W."/>
            <person name="Zhu G."/>
            <person name="Tu Y."/>
            <person name="Jia J."/>
            <person name="Zhang Y."/>
            <person name="Chen J."/>
            <person name="Kang H."/>
            <person name="Chen X."/>
            <person name="Shao C."/>
            <person name="Sun Y."/>
            <person name="Hu Q."/>
            <person name="Zhang X."/>
            <person name="Zhang W."/>
            <person name="Wang L."/>
            <person name="Ding C."/>
            <person name="Sheng H."/>
            <person name="Gu J."/>
            <person name="Chen S."/>
            <person name="Ni L."/>
            <person name="Zhu F."/>
            <person name="Chen W."/>
            <person name="Lan L."/>
            <person name="Lai Y."/>
            <person name="Cheng Z."/>
            <person name="Gu M."/>
            <person name="Jiang J."/>
            <person name="Li J."/>
            <person name="Hong G."/>
            <person name="Xue Y."/>
            <person name="Han B."/>
        </authorList>
    </citation>
    <scope>NUCLEOTIDE SEQUENCE [LARGE SCALE GENOMIC DNA]</scope>
    <source>
        <strain>cv. Nipponbare</strain>
    </source>
</reference>
<reference key="2">
    <citation type="journal article" date="2005" name="Nature">
        <title>The map-based sequence of the rice genome.</title>
        <authorList>
            <consortium name="International rice genome sequencing project (IRGSP)"/>
        </authorList>
    </citation>
    <scope>NUCLEOTIDE SEQUENCE [LARGE SCALE GENOMIC DNA]</scope>
    <source>
        <strain>cv. Nipponbare</strain>
    </source>
</reference>
<reference key="3">
    <citation type="journal article" date="2008" name="Nucleic Acids Res.">
        <title>The rice annotation project database (RAP-DB): 2008 update.</title>
        <authorList>
            <consortium name="The rice annotation project (RAP)"/>
        </authorList>
    </citation>
    <scope>GENOME REANNOTATION</scope>
    <source>
        <strain>cv. Nipponbare</strain>
    </source>
</reference>
<reference key="4">
    <citation type="journal article" date="2013" name="Rice">
        <title>Improvement of the Oryza sativa Nipponbare reference genome using next generation sequence and optical map data.</title>
        <authorList>
            <person name="Kawahara Y."/>
            <person name="de la Bastide M."/>
            <person name="Hamilton J.P."/>
            <person name="Kanamori H."/>
            <person name="McCombie W.R."/>
            <person name="Ouyang S."/>
            <person name="Schwartz D.C."/>
            <person name="Tanaka T."/>
            <person name="Wu J."/>
            <person name="Zhou S."/>
            <person name="Childs K.L."/>
            <person name="Davidson R.M."/>
            <person name="Lin H."/>
            <person name="Quesada-Ocampo L."/>
            <person name="Vaillancourt B."/>
            <person name="Sakai H."/>
            <person name="Lee S.S."/>
            <person name="Kim J."/>
            <person name="Numa H."/>
            <person name="Itoh T."/>
            <person name="Buell C.R."/>
            <person name="Matsumoto T."/>
        </authorList>
    </citation>
    <scope>GENOME REANNOTATION</scope>
    <source>
        <strain>cv. Nipponbare</strain>
    </source>
</reference>
<reference key="5">
    <citation type="journal article" date="2005" name="PLoS Biol.">
        <title>The genomes of Oryza sativa: a history of duplications.</title>
        <authorList>
            <person name="Yu J."/>
            <person name="Wang J."/>
            <person name="Lin W."/>
            <person name="Li S."/>
            <person name="Li H."/>
            <person name="Zhou J."/>
            <person name="Ni P."/>
            <person name="Dong W."/>
            <person name="Hu S."/>
            <person name="Zeng C."/>
            <person name="Zhang J."/>
            <person name="Zhang Y."/>
            <person name="Li R."/>
            <person name="Xu Z."/>
            <person name="Li S."/>
            <person name="Li X."/>
            <person name="Zheng H."/>
            <person name="Cong L."/>
            <person name="Lin L."/>
            <person name="Yin J."/>
            <person name="Geng J."/>
            <person name="Li G."/>
            <person name="Shi J."/>
            <person name="Liu J."/>
            <person name="Lv H."/>
            <person name="Li J."/>
            <person name="Wang J."/>
            <person name="Deng Y."/>
            <person name="Ran L."/>
            <person name="Shi X."/>
            <person name="Wang X."/>
            <person name="Wu Q."/>
            <person name="Li C."/>
            <person name="Ren X."/>
            <person name="Wang J."/>
            <person name="Wang X."/>
            <person name="Li D."/>
            <person name="Liu D."/>
            <person name="Zhang X."/>
            <person name="Ji Z."/>
            <person name="Zhao W."/>
            <person name="Sun Y."/>
            <person name="Zhang Z."/>
            <person name="Bao J."/>
            <person name="Han Y."/>
            <person name="Dong L."/>
            <person name="Ji J."/>
            <person name="Chen P."/>
            <person name="Wu S."/>
            <person name="Liu J."/>
            <person name="Xiao Y."/>
            <person name="Bu D."/>
            <person name="Tan J."/>
            <person name="Yang L."/>
            <person name="Ye C."/>
            <person name="Zhang J."/>
            <person name="Xu J."/>
            <person name="Zhou Y."/>
            <person name="Yu Y."/>
            <person name="Zhang B."/>
            <person name="Zhuang S."/>
            <person name="Wei H."/>
            <person name="Liu B."/>
            <person name="Lei M."/>
            <person name="Yu H."/>
            <person name="Li Y."/>
            <person name="Xu H."/>
            <person name="Wei S."/>
            <person name="He X."/>
            <person name="Fang L."/>
            <person name="Zhang Z."/>
            <person name="Zhang Y."/>
            <person name="Huang X."/>
            <person name="Su Z."/>
            <person name="Tong W."/>
            <person name="Li J."/>
            <person name="Tong Z."/>
            <person name="Li S."/>
            <person name="Ye J."/>
            <person name="Wang L."/>
            <person name="Fang L."/>
            <person name="Lei T."/>
            <person name="Chen C.-S."/>
            <person name="Chen H.-C."/>
            <person name="Xu Z."/>
            <person name="Li H."/>
            <person name="Huang H."/>
            <person name="Zhang F."/>
            <person name="Xu H."/>
            <person name="Li N."/>
            <person name="Zhao C."/>
            <person name="Li S."/>
            <person name="Dong L."/>
            <person name="Huang Y."/>
            <person name="Li L."/>
            <person name="Xi Y."/>
            <person name="Qi Q."/>
            <person name="Li W."/>
            <person name="Zhang B."/>
            <person name="Hu W."/>
            <person name="Zhang Y."/>
            <person name="Tian X."/>
            <person name="Jiao Y."/>
            <person name="Liang X."/>
            <person name="Jin J."/>
            <person name="Gao L."/>
            <person name="Zheng W."/>
            <person name="Hao B."/>
            <person name="Liu S.-M."/>
            <person name="Wang W."/>
            <person name="Yuan L."/>
            <person name="Cao M."/>
            <person name="McDermott J."/>
            <person name="Samudrala R."/>
            <person name="Wang J."/>
            <person name="Wong G.K.-S."/>
            <person name="Yang H."/>
        </authorList>
    </citation>
    <scope>NUCLEOTIDE SEQUENCE [LARGE SCALE GENOMIC DNA]</scope>
    <source>
        <strain>cv. Nipponbare</strain>
    </source>
</reference>
<reference key="6">
    <citation type="journal article" date="2003" name="Science">
        <title>Collection, mapping, and annotation of over 28,000 cDNA clones from japonica rice.</title>
        <authorList>
            <consortium name="The rice full-length cDNA consortium"/>
        </authorList>
    </citation>
    <scope>NUCLEOTIDE SEQUENCE [LARGE SCALE MRNA]</scope>
    <source>
        <strain>cv. Nipponbare</strain>
    </source>
</reference>
<reference key="7">
    <citation type="journal article" date="2008" name="Plant Physiol.">
        <title>Genomic survey and gene expression analysis of the basic leucine zipper transcription factor family in rice.</title>
        <authorList>
            <person name="Nijhawan A."/>
            <person name="Jain M."/>
            <person name="Tyagi A.K."/>
            <person name="Khurana J.P."/>
        </authorList>
    </citation>
    <scope>GENE FAMILY</scope>
    <scope>NOMENCLATURE</scope>
</reference>
<sequence>MELYPGYLEDHFNIHKLSISSASPPEYMTSASTQFAAPVRMGAYDRPPPVGMWSHEQFKVDNGQATSASTIMEAEMKFENRLEEIPQVVLEEGRNVDQEASKPPDKVLRRLAQNREAARKSRLRKKAYIQQLETSRLKLAQLEQELQRARQQAVYANGSLREPNLGFTGPIDPGALGFEIKYSHWVDEQNRNTGELRNALLQGQTTDQDLELKLLVEAGLDNYNRLFEMKEEAANSDVFYIMSGMWKTPTERFFLWIGGFRPSEVLKNLRPQLEPLTDKQVVEVGGLQQTSMQVEDALSQGMDKLKQTIADSLTAADPFDSPEAYMVHMANAVEQLRSLVQFVTQADHLRQQTLQEMHRILTTRQAARGLLALGDYFQRFRALSSLWAARPRDSGIS</sequence>
<name>TGAL6_ORYSJ</name>
<accession>A0A0P0WFC8</accession>
<accession>A3AXU5</accession>
<accession>B7EMK6</accession>
<accession>C7J146</accession>
<accession>Q7XTU9</accession>
<keyword id="KW-0238">DNA-binding</keyword>
<keyword id="KW-0539">Nucleus</keyword>
<keyword id="KW-0611">Plant defense</keyword>
<keyword id="KW-1185">Reference proteome</keyword>
<keyword id="KW-0804">Transcription</keyword>
<keyword id="KW-0805">Transcription regulation</keyword>
<feature type="chain" id="PRO_0000437020" description="Transcription factor TGAL6">
    <location>
        <begin position="1"/>
        <end position="397"/>
    </location>
</feature>
<feature type="domain" description="bZIP" evidence="2">
    <location>
        <begin position="104"/>
        <end position="148"/>
    </location>
</feature>
<feature type="domain" description="DOG1" evidence="3">
    <location>
        <begin position="175"/>
        <end position="390"/>
    </location>
</feature>
<feature type="region of interest" description="Basic motif" evidence="2">
    <location>
        <begin position="106"/>
        <end position="126"/>
    </location>
</feature>
<feature type="region of interest" description="Leucine-zipper" evidence="2">
    <location>
        <begin position="132"/>
        <end position="146"/>
    </location>
</feature>
<organism>
    <name type="scientific">Oryza sativa subsp. japonica</name>
    <name type="common">Rice</name>
    <dbReference type="NCBI Taxonomy" id="39947"/>
    <lineage>
        <taxon>Eukaryota</taxon>
        <taxon>Viridiplantae</taxon>
        <taxon>Streptophyta</taxon>
        <taxon>Embryophyta</taxon>
        <taxon>Tracheophyta</taxon>
        <taxon>Spermatophyta</taxon>
        <taxon>Magnoliopsida</taxon>
        <taxon>Liliopsida</taxon>
        <taxon>Poales</taxon>
        <taxon>Poaceae</taxon>
        <taxon>BOP clade</taxon>
        <taxon>Oryzoideae</taxon>
        <taxon>Oryzeae</taxon>
        <taxon>Oryzinae</taxon>
        <taxon>Oryza</taxon>
        <taxon>Oryza sativa</taxon>
    </lineage>
</organism>
<proteinExistence type="evidence at transcript level"/>
<comment type="function">
    <text evidence="1">Transcriptional regulator involved in defense response.</text>
</comment>
<comment type="subcellular location">
    <subcellularLocation>
        <location evidence="2">Nucleus</location>
    </subcellularLocation>
</comment>
<comment type="similarity">
    <text evidence="5">Belongs to the bZIP family.</text>
</comment>
<comment type="sequence caution" evidence="5">
    <conflict type="erroneous initiation">
        <sequence resource="EMBL-CDS" id="BAG93603"/>
    </conflict>
    <text>Truncated N-terminus.</text>
</comment>
<comment type="sequence caution" evidence="5">
    <conflict type="erroneous gene model prediction">
        <sequence resource="EMBL-CDS" id="BAH92837"/>
    </conflict>
</comment>
<comment type="sequence caution" evidence="5">
    <conflict type="erroneous gene model prediction">
        <sequence resource="EMBL-CDS" id="BAS91228"/>
    </conflict>
</comment>
<comment type="sequence caution" evidence="5">
    <conflict type="erroneous gene model prediction">
        <sequence resource="EMBL-CDS" id="CAD41728"/>
    </conflict>
</comment>
<comment type="sequence caution" evidence="5">
    <conflict type="erroneous gene model prediction">
        <sequence resource="EMBL-CDS" id="EAZ32134"/>
    </conflict>
</comment>
<dbReference type="EMBL" id="AL606657">
    <property type="protein sequence ID" value="CAD41728.3"/>
    <property type="status" value="ALT_SEQ"/>
    <property type="molecule type" value="Genomic_DNA"/>
</dbReference>
<dbReference type="EMBL" id="AP008210">
    <property type="protein sequence ID" value="BAH92837.1"/>
    <property type="status" value="ALT_SEQ"/>
    <property type="molecule type" value="Genomic_DNA"/>
</dbReference>
<dbReference type="EMBL" id="AP014960">
    <property type="protein sequence ID" value="BAS91227.1"/>
    <property type="molecule type" value="Genomic_DNA"/>
</dbReference>
<dbReference type="EMBL" id="AP014960">
    <property type="protein sequence ID" value="BAS91228.1"/>
    <property type="status" value="ALT_SEQ"/>
    <property type="molecule type" value="Genomic_DNA"/>
</dbReference>
<dbReference type="EMBL" id="CM000141">
    <property type="protein sequence ID" value="EAZ32134.1"/>
    <property type="status" value="ALT_SEQ"/>
    <property type="molecule type" value="Genomic_DNA"/>
</dbReference>
<dbReference type="EMBL" id="AK073715">
    <property type="protein sequence ID" value="BAG93603.1"/>
    <property type="status" value="ALT_INIT"/>
    <property type="molecule type" value="mRNA"/>
</dbReference>
<dbReference type="RefSeq" id="XP_015636713.1">
    <property type="nucleotide sequence ID" value="XM_015781227.1"/>
</dbReference>
<dbReference type="RefSeq" id="XP_015636714.1">
    <property type="nucleotide sequence ID" value="XM_015781228.1"/>
</dbReference>
<dbReference type="RefSeq" id="XP_015636715.1">
    <property type="nucleotide sequence ID" value="XM_015781229.1"/>
</dbReference>
<dbReference type="SMR" id="A0A0P0WFC8"/>
<dbReference type="FunCoup" id="A0A0P0WFC8">
    <property type="interactions" value="139"/>
</dbReference>
<dbReference type="STRING" id="39947.A0A0P0WFC8"/>
<dbReference type="PaxDb" id="39947-A0A0P0WFC8"/>
<dbReference type="EnsemblPlants" id="Os04t0637000-01">
    <property type="protein sequence ID" value="Os04t0637000-01"/>
    <property type="gene ID" value="Os04g0637000"/>
</dbReference>
<dbReference type="Gramene" id="Os04t0637000-01">
    <property type="protein sequence ID" value="Os04t0637000-01"/>
    <property type="gene ID" value="Os04g0637000"/>
</dbReference>
<dbReference type="KEGG" id="dosa:Os04g0637000"/>
<dbReference type="eggNOG" id="ENOG502QS1H">
    <property type="taxonomic scope" value="Eukaryota"/>
</dbReference>
<dbReference type="InParanoid" id="A0A0P0WFC8"/>
<dbReference type="OMA" id="GLNNYEH"/>
<dbReference type="OrthoDB" id="2015618at2759"/>
<dbReference type="Proteomes" id="UP000000763">
    <property type="component" value="Chromosome 4"/>
</dbReference>
<dbReference type="Proteomes" id="UP000007752">
    <property type="component" value="Chromosome 4"/>
</dbReference>
<dbReference type="Proteomes" id="UP000059680">
    <property type="component" value="Chromosome 4"/>
</dbReference>
<dbReference type="GO" id="GO:0005634">
    <property type="term" value="C:nucleus"/>
    <property type="evidence" value="ECO:0007669"/>
    <property type="project" value="UniProtKB-SubCell"/>
</dbReference>
<dbReference type="GO" id="GO:0003700">
    <property type="term" value="F:DNA-binding transcription factor activity"/>
    <property type="evidence" value="ECO:0007669"/>
    <property type="project" value="InterPro"/>
</dbReference>
<dbReference type="GO" id="GO:0043565">
    <property type="term" value="F:sequence-specific DNA binding"/>
    <property type="evidence" value="ECO:0007669"/>
    <property type="project" value="InterPro"/>
</dbReference>
<dbReference type="GO" id="GO:0006952">
    <property type="term" value="P:defense response"/>
    <property type="evidence" value="ECO:0007669"/>
    <property type="project" value="UniProtKB-KW"/>
</dbReference>
<dbReference type="GO" id="GO:0006351">
    <property type="term" value="P:DNA-templated transcription"/>
    <property type="evidence" value="ECO:0007669"/>
    <property type="project" value="InterPro"/>
</dbReference>
<dbReference type="CDD" id="cd14708">
    <property type="entry name" value="bZIP_HBP1b-like"/>
    <property type="match status" value="1"/>
</dbReference>
<dbReference type="FunFam" id="1.20.5.170:FF:000019">
    <property type="entry name" value="BZIP family transcription factor"/>
    <property type="match status" value="1"/>
</dbReference>
<dbReference type="Gene3D" id="1.20.5.170">
    <property type="match status" value="1"/>
</dbReference>
<dbReference type="InterPro" id="IPR004827">
    <property type="entry name" value="bZIP"/>
</dbReference>
<dbReference type="InterPro" id="IPR046347">
    <property type="entry name" value="bZIP_sf"/>
</dbReference>
<dbReference type="InterPro" id="IPR025422">
    <property type="entry name" value="TGA_domain"/>
</dbReference>
<dbReference type="PANTHER" id="PTHR45693:SF36">
    <property type="entry name" value="TRANSCRIPTION FACTOR TGA4"/>
    <property type="match status" value="1"/>
</dbReference>
<dbReference type="PANTHER" id="PTHR45693">
    <property type="entry name" value="TRANSCRIPTION FACTOR TGA9"/>
    <property type="match status" value="1"/>
</dbReference>
<dbReference type="Pfam" id="PF00170">
    <property type="entry name" value="bZIP_1"/>
    <property type="match status" value="1"/>
</dbReference>
<dbReference type="Pfam" id="PF14144">
    <property type="entry name" value="DOG1"/>
    <property type="match status" value="1"/>
</dbReference>
<dbReference type="SMART" id="SM00338">
    <property type="entry name" value="BRLZ"/>
    <property type="match status" value="1"/>
</dbReference>
<dbReference type="SUPFAM" id="SSF57959">
    <property type="entry name" value="Leucine zipper domain"/>
    <property type="match status" value="1"/>
</dbReference>
<dbReference type="PROSITE" id="PS50217">
    <property type="entry name" value="BZIP"/>
    <property type="match status" value="1"/>
</dbReference>
<dbReference type="PROSITE" id="PS00036">
    <property type="entry name" value="BZIP_BASIC"/>
    <property type="match status" value="1"/>
</dbReference>
<dbReference type="PROSITE" id="PS51806">
    <property type="entry name" value="DOG1"/>
    <property type="match status" value="1"/>
</dbReference>
<protein>
    <recommendedName>
        <fullName evidence="5">Transcription factor TGAL6</fullName>
    </recommendedName>
    <alternativeName>
        <fullName evidence="4">bZIP transcription factor 37</fullName>
        <shortName evidence="4">OsbZIP37</shortName>
    </alternativeName>
</protein>